<proteinExistence type="inferred from homology"/>
<reference key="1">
    <citation type="submission" date="2007-10" db="EMBL/GenBank/DDBJ databases">
        <title>Brucella canis ATCC 23365 whole genome shotgun sequencing project.</title>
        <authorList>
            <person name="Setubal J.C."/>
            <person name="Bowns C."/>
            <person name="Boyle S."/>
            <person name="Crasta O.R."/>
            <person name="Czar M.J."/>
            <person name="Dharmanolla C."/>
            <person name="Gillespie J.J."/>
            <person name="Kenyon R.W."/>
            <person name="Lu J."/>
            <person name="Mane S."/>
            <person name="Mohapatra S."/>
            <person name="Nagrani S."/>
            <person name="Purkayastha A."/>
            <person name="Rajasimha H.K."/>
            <person name="Shallom J.M."/>
            <person name="Shallom S."/>
            <person name="Shukla M."/>
            <person name="Snyder E.E."/>
            <person name="Sobral B.W."/>
            <person name="Wattam A.R."/>
            <person name="Will R."/>
            <person name="Williams K."/>
            <person name="Yoo H."/>
            <person name="Bruce D."/>
            <person name="Detter C."/>
            <person name="Munk C."/>
            <person name="Brettin T.S."/>
        </authorList>
    </citation>
    <scope>NUCLEOTIDE SEQUENCE [LARGE SCALE GENOMIC DNA]</scope>
    <source>
        <strain>ATCC 23365 / NCTC 10854 / RM-666</strain>
    </source>
</reference>
<gene>
    <name evidence="1" type="primary">tolB</name>
    <name type="ordered locus">BCAN_A1736</name>
</gene>
<comment type="function">
    <text evidence="1">Part of the Tol-Pal system, which plays a role in outer membrane invagination during cell division and is important for maintaining outer membrane integrity.</text>
</comment>
<comment type="subunit">
    <text evidence="1">The Tol-Pal system is composed of five core proteins: the inner membrane proteins TolA, TolQ and TolR, the periplasmic protein TolB and the outer membrane protein Pal. They form a network linking the inner and outer membranes and the peptidoglycan layer.</text>
</comment>
<comment type="subcellular location">
    <subcellularLocation>
        <location evidence="1">Periplasm</location>
    </subcellularLocation>
</comment>
<comment type="similarity">
    <text evidence="1">Belongs to the TolB family.</text>
</comment>
<evidence type="ECO:0000255" key="1">
    <source>
        <dbReference type="HAMAP-Rule" id="MF_00671"/>
    </source>
</evidence>
<accession>A9M7J5</accession>
<feature type="signal peptide" evidence="1">
    <location>
        <begin position="1"/>
        <end position="33"/>
    </location>
</feature>
<feature type="chain" id="PRO_1000082940" description="Tol-Pal system protein TolB" evidence="1">
    <location>
        <begin position="34"/>
        <end position="443"/>
    </location>
</feature>
<protein>
    <recommendedName>
        <fullName evidence="1">Tol-Pal system protein TolB</fullName>
    </recommendedName>
</protein>
<organism>
    <name type="scientific">Brucella canis (strain ATCC 23365 / NCTC 10854 / RM-666)</name>
    <dbReference type="NCBI Taxonomy" id="483179"/>
    <lineage>
        <taxon>Bacteria</taxon>
        <taxon>Pseudomonadati</taxon>
        <taxon>Pseudomonadota</taxon>
        <taxon>Alphaproteobacteria</taxon>
        <taxon>Hyphomicrobiales</taxon>
        <taxon>Brucellaceae</taxon>
        <taxon>Brucella/Ochrobactrum group</taxon>
        <taxon>Brucella</taxon>
    </lineage>
</organism>
<keyword id="KW-0131">Cell cycle</keyword>
<keyword id="KW-0132">Cell division</keyword>
<keyword id="KW-0574">Periplasm</keyword>
<keyword id="KW-1185">Reference proteome</keyword>
<keyword id="KW-0732">Signal</keyword>
<dbReference type="EMBL" id="CP000872">
    <property type="protein sequence ID" value="ABX62742.1"/>
    <property type="molecule type" value="Genomic_DNA"/>
</dbReference>
<dbReference type="RefSeq" id="WP_004692773.1">
    <property type="nucleotide sequence ID" value="NC_010103.1"/>
</dbReference>
<dbReference type="SMR" id="A9M7J5"/>
<dbReference type="GeneID" id="55591317"/>
<dbReference type="KEGG" id="bcs:BCAN_A1736"/>
<dbReference type="HOGENOM" id="CLU_047123_0_0_5"/>
<dbReference type="PhylomeDB" id="A9M7J5"/>
<dbReference type="Proteomes" id="UP000001385">
    <property type="component" value="Chromosome I"/>
</dbReference>
<dbReference type="GO" id="GO:0042597">
    <property type="term" value="C:periplasmic space"/>
    <property type="evidence" value="ECO:0007669"/>
    <property type="project" value="UniProtKB-SubCell"/>
</dbReference>
<dbReference type="GO" id="GO:0051301">
    <property type="term" value="P:cell division"/>
    <property type="evidence" value="ECO:0007669"/>
    <property type="project" value="UniProtKB-UniRule"/>
</dbReference>
<dbReference type="GO" id="GO:0017038">
    <property type="term" value="P:protein import"/>
    <property type="evidence" value="ECO:0007669"/>
    <property type="project" value="InterPro"/>
</dbReference>
<dbReference type="Gene3D" id="2.120.10.30">
    <property type="entry name" value="TolB, C-terminal domain"/>
    <property type="match status" value="1"/>
</dbReference>
<dbReference type="Gene3D" id="3.40.50.10070">
    <property type="entry name" value="TolB, N-terminal domain"/>
    <property type="match status" value="1"/>
</dbReference>
<dbReference type="HAMAP" id="MF_00671">
    <property type="entry name" value="TolB"/>
    <property type="match status" value="1"/>
</dbReference>
<dbReference type="InterPro" id="IPR011042">
    <property type="entry name" value="6-blade_b-propeller_TolB-like"/>
</dbReference>
<dbReference type="InterPro" id="IPR011659">
    <property type="entry name" value="PD40"/>
</dbReference>
<dbReference type="InterPro" id="IPR014167">
    <property type="entry name" value="Tol-Pal_TolB"/>
</dbReference>
<dbReference type="InterPro" id="IPR007195">
    <property type="entry name" value="TolB_N"/>
</dbReference>
<dbReference type="NCBIfam" id="TIGR02800">
    <property type="entry name" value="propeller_TolB"/>
    <property type="match status" value="1"/>
</dbReference>
<dbReference type="PANTHER" id="PTHR36842:SF1">
    <property type="entry name" value="PROTEIN TOLB"/>
    <property type="match status" value="1"/>
</dbReference>
<dbReference type="PANTHER" id="PTHR36842">
    <property type="entry name" value="PROTEIN TOLB HOMOLOG"/>
    <property type="match status" value="1"/>
</dbReference>
<dbReference type="Pfam" id="PF07676">
    <property type="entry name" value="PD40"/>
    <property type="match status" value="3"/>
</dbReference>
<dbReference type="Pfam" id="PF04052">
    <property type="entry name" value="TolB_N"/>
    <property type="match status" value="1"/>
</dbReference>
<dbReference type="SUPFAM" id="SSF52964">
    <property type="entry name" value="TolB, N-terminal domain"/>
    <property type="match status" value="1"/>
</dbReference>
<dbReference type="SUPFAM" id="SSF69304">
    <property type="entry name" value="Tricorn protease N-terminal domain"/>
    <property type="match status" value="1"/>
</dbReference>
<sequence length="443" mass="48537">MKIGIINTKIRTVFSAFACMIAASLVCTMPARAVVEININKGVIEPLPIAITDFLSADQLGSNITSVIAADLERSGLFAPIDKGAFIEKISNPDAAPRFEDWKVINAQALVTGRITKQPDGRLKAEFHLWDTFGGQRMIGQQFFTTPDNWRRVAHIIADAIYERLTGDKGYFDTRVVFVDESGPAQKRVKRLAIMDQDGANVRFISDGRALSLTPRFSPNRQEVTYMSFEGGSPKVYLLQLETGQRELVGNFPGMTIAPRFSPDGQKVVMSLLQDDGSANIYTMDLRNRTTTRLTSSQAIDTGASYSPDGSQIVFTSDRGGRPQLYVMGADGSNPRRISMGDGSYSTPVWSPRGDLIAFTKQSQGQFSIGVMKTDGSGERLLTSGFHNEGPTWAPNGRVLMFFRKAAGAGGPKLFTIDLTGRNERQIQTPNFASDPAWSPLLE</sequence>
<name>TOLB_BRUC2</name>